<keyword id="KW-0217">Developmental protein</keyword>
<keyword id="KW-0903">Direct protein sequencing</keyword>
<keyword id="KW-0325">Glycoprotein</keyword>
<keyword id="KW-0964">Secreted</keyword>
<reference evidence="7" key="1">
    <citation type="submission" date="2009-09" db="UniProtKB">
        <authorList>
            <person name="Shelby K.S."/>
            <person name="Webb B.A."/>
        </authorList>
    </citation>
    <scope>PROTEIN SEQUENCE</scope>
    <source>
        <tissue>Hemolymph</tissue>
    </source>
</reference>
<feature type="chain" id="PRO_0000392513" description="Chitinase-like protein">
    <location>
        <begin position="1" status="less than"/>
        <end position="37" status="greater than"/>
    </location>
</feature>
<feature type="domain" description="GH18" evidence="5">
    <location>
        <begin position="1" status="less than"/>
        <end position="37" status="greater than"/>
    </location>
</feature>
<feature type="region of interest" description="Disordered" evidence="6">
    <location>
        <begin position="1"/>
        <end position="20"/>
    </location>
</feature>
<feature type="non-consecutive residues" evidence="7">
    <location>
        <begin position="17"/>
        <end position="18"/>
    </location>
</feature>
<feature type="non-terminal residue">
    <location>
        <position position="1"/>
    </location>
</feature>
<feature type="non-terminal residue">
    <location>
        <position position="37"/>
    </location>
</feature>
<name>IDGF_HELVI</name>
<organism>
    <name type="scientific">Heliothis virescens</name>
    <name type="common">Tobacco budworm moth</name>
    <dbReference type="NCBI Taxonomy" id="7102"/>
    <lineage>
        <taxon>Eukaryota</taxon>
        <taxon>Metazoa</taxon>
        <taxon>Ecdysozoa</taxon>
        <taxon>Arthropoda</taxon>
        <taxon>Hexapoda</taxon>
        <taxon>Insecta</taxon>
        <taxon>Pterygota</taxon>
        <taxon>Neoptera</taxon>
        <taxon>Endopterygota</taxon>
        <taxon>Lepidoptera</taxon>
        <taxon>Glossata</taxon>
        <taxon>Ditrysia</taxon>
        <taxon>Noctuoidea</taxon>
        <taxon>Noctuidae</taxon>
        <taxon>Heliothinae</taxon>
        <taxon>Heliothis</taxon>
    </lineage>
</organism>
<accession>P86357</accession>
<dbReference type="GO" id="GO:0005576">
    <property type="term" value="C:extracellular region"/>
    <property type="evidence" value="ECO:0007669"/>
    <property type="project" value="UniProtKB-SubCell"/>
</dbReference>
<dbReference type="GO" id="GO:0005975">
    <property type="term" value="P:carbohydrate metabolic process"/>
    <property type="evidence" value="ECO:0007669"/>
    <property type="project" value="InterPro"/>
</dbReference>
<dbReference type="InterPro" id="IPR001223">
    <property type="entry name" value="Glyco_hydro18_cat"/>
</dbReference>
<dbReference type="PROSITE" id="PS51910">
    <property type="entry name" value="GH18_2"/>
    <property type="match status" value="1"/>
</dbReference>
<sequence>VLLSVGGDADTESPEKKNLGGVSIVDLSMDDFRGLLT</sequence>
<comment type="function">
    <text evidence="3">Cooperates with insulin-like peptides to stimulate the proliferation, polarization and motility of imaginal disk cells. May act by stabilizing the binding of insulin-like peptides to its receptor through a simultaneous interaction with both molecules to form a multiprotein signaling complex (By similarity).</text>
</comment>
<comment type="subcellular location">
    <subcellularLocation>
        <location evidence="3">Secreted</location>
    </subcellularLocation>
    <text evidence="1">Secreted in hemolymph. It is probably transported to target tissues via hemolymph.</text>
</comment>
<comment type="PTM">
    <text evidence="2">Glycosylated.</text>
</comment>
<comment type="similarity">
    <text evidence="4">Belongs to the glycosyl hydrolase 18 family. IDGF subfamily.</text>
</comment>
<protein>
    <recommendedName>
        <fullName evidence="3">Chitinase-like protein</fullName>
    </recommendedName>
    <alternativeName>
        <fullName evidence="3">Imaginal disk growth factor protein</fullName>
    </alternativeName>
</protein>
<evidence type="ECO:0000250" key="1"/>
<evidence type="ECO:0000250" key="2">
    <source>
        <dbReference type="UniProtKB" id="Q23997"/>
    </source>
</evidence>
<evidence type="ECO:0000250" key="3">
    <source>
        <dbReference type="UniProtKB" id="Q9W303"/>
    </source>
</evidence>
<evidence type="ECO:0000255" key="4"/>
<evidence type="ECO:0000255" key="5">
    <source>
        <dbReference type="PROSITE-ProRule" id="PRU01258"/>
    </source>
</evidence>
<evidence type="ECO:0000256" key="6">
    <source>
        <dbReference type="SAM" id="MobiDB-lite"/>
    </source>
</evidence>
<evidence type="ECO:0000305" key="7"/>
<proteinExistence type="evidence at protein level"/>